<reference key="1">
    <citation type="submission" date="2008-04" db="EMBL/GenBank/DDBJ databases">
        <title>Complete sequence of Clostridium botulinum strain Eklund.</title>
        <authorList>
            <person name="Brinkac L.M."/>
            <person name="Brown J.L."/>
            <person name="Bruce D."/>
            <person name="Detter C."/>
            <person name="Munk C."/>
            <person name="Smith L.A."/>
            <person name="Smith T.J."/>
            <person name="Sutton G."/>
            <person name="Brettin T.S."/>
        </authorList>
    </citation>
    <scope>NUCLEOTIDE SEQUENCE [LARGE SCALE GENOMIC DNA]</scope>
    <source>
        <strain>Eklund 17B / Type B</strain>
    </source>
</reference>
<dbReference type="EMBL" id="CP001056">
    <property type="protein sequence ID" value="ACD24428.1"/>
    <property type="molecule type" value="Genomic_DNA"/>
</dbReference>
<dbReference type="SMR" id="B2TIK3"/>
<dbReference type="KEGG" id="cbk:CLL_A0266"/>
<dbReference type="PATRIC" id="fig|935198.13.peg.241"/>
<dbReference type="HOGENOM" id="CLU_092403_0_2_9"/>
<dbReference type="Proteomes" id="UP000001195">
    <property type="component" value="Chromosome"/>
</dbReference>
<dbReference type="GO" id="GO:0015935">
    <property type="term" value="C:small ribosomal subunit"/>
    <property type="evidence" value="ECO:0007669"/>
    <property type="project" value="InterPro"/>
</dbReference>
<dbReference type="GO" id="GO:0019843">
    <property type="term" value="F:rRNA binding"/>
    <property type="evidence" value="ECO:0007669"/>
    <property type="project" value="UniProtKB-UniRule"/>
</dbReference>
<dbReference type="GO" id="GO:0003735">
    <property type="term" value="F:structural constituent of ribosome"/>
    <property type="evidence" value="ECO:0007669"/>
    <property type="project" value="InterPro"/>
</dbReference>
<dbReference type="GO" id="GO:0042274">
    <property type="term" value="P:ribosomal small subunit biogenesis"/>
    <property type="evidence" value="ECO:0007669"/>
    <property type="project" value="TreeGrafter"/>
</dbReference>
<dbReference type="GO" id="GO:0006412">
    <property type="term" value="P:translation"/>
    <property type="evidence" value="ECO:0007669"/>
    <property type="project" value="UniProtKB-UniRule"/>
</dbReference>
<dbReference type="CDD" id="cd00165">
    <property type="entry name" value="S4"/>
    <property type="match status" value="1"/>
</dbReference>
<dbReference type="FunFam" id="1.10.1050.10:FF:000001">
    <property type="entry name" value="30S ribosomal protein S4"/>
    <property type="match status" value="1"/>
</dbReference>
<dbReference type="FunFam" id="3.10.290.10:FF:000001">
    <property type="entry name" value="30S ribosomal protein S4"/>
    <property type="match status" value="1"/>
</dbReference>
<dbReference type="Gene3D" id="1.10.1050.10">
    <property type="entry name" value="Ribosomal Protein S4 Delta 41, Chain A, domain 1"/>
    <property type="match status" value="1"/>
</dbReference>
<dbReference type="Gene3D" id="3.10.290.10">
    <property type="entry name" value="RNA-binding S4 domain"/>
    <property type="match status" value="1"/>
</dbReference>
<dbReference type="HAMAP" id="MF_01306_B">
    <property type="entry name" value="Ribosomal_uS4_B"/>
    <property type="match status" value="1"/>
</dbReference>
<dbReference type="InterPro" id="IPR022801">
    <property type="entry name" value="Ribosomal_uS4"/>
</dbReference>
<dbReference type="InterPro" id="IPR005709">
    <property type="entry name" value="Ribosomal_uS4_bac-type"/>
</dbReference>
<dbReference type="InterPro" id="IPR018079">
    <property type="entry name" value="Ribosomal_uS4_CS"/>
</dbReference>
<dbReference type="InterPro" id="IPR001912">
    <property type="entry name" value="Ribosomal_uS4_N"/>
</dbReference>
<dbReference type="InterPro" id="IPR002942">
    <property type="entry name" value="S4_RNA-bd"/>
</dbReference>
<dbReference type="InterPro" id="IPR036986">
    <property type="entry name" value="S4_RNA-bd_sf"/>
</dbReference>
<dbReference type="NCBIfam" id="NF003717">
    <property type="entry name" value="PRK05327.1"/>
    <property type="match status" value="1"/>
</dbReference>
<dbReference type="NCBIfam" id="TIGR01017">
    <property type="entry name" value="rpsD_bact"/>
    <property type="match status" value="1"/>
</dbReference>
<dbReference type="PANTHER" id="PTHR11831">
    <property type="entry name" value="30S 40S RIBOSOMAL PROTEIN"/>
    <property type="match status" value="1"/>
</dbReference>
<dbReference type="PANTHER" id="PTHR11831:SF4">
    <property type="entry name" value="SMALL RIBOSOMAL SUBUNIT PROTEIN US4M"/>
    <property type="match status" value="1"/>
</dbReference>
<dbReference type="Pfam" id="PF00163">
    <property type="entry name" value="Ribosomal_S4"/>
    <property type="match status" value="1"/>
</dbReference>
<dbReference type="Pfam" id="PF01479">
    <property type="entry name" value="S4"/>
    <property type="match status" value="1"/>
</dbReference>
<dbReference type="SMART" id="SM01390">
    <property type="entry name" value="Ribosomal_S4"/>
    <property type="match status" value="1"/>
</dbReference>
<dbReference type="SMART" id="SM00363">
    <property type="entry name" value="S4"/>
    <property type="match status" value="1"/>
</dbReference>
<dbReference type="SUPFAM" id="SSF55174">
    <property type="entry name" value="Alpha-L RNA-binding motif"/>
    <property type="match status" value="1"/>
</dbReference>
<dbReference type="PROSITE" id="PS00632">
    <property type="entry name" value="RIBOSOMAL_S4"/>
    <property type="match status" value="1"/>
</dbReference>
<dbReference type="PROSITE" id="PS50889">
    <property type="entry name" value="S4"/>
    <property type="match status" value="1"/>
</dbReference>
<organism>
    <name type="scientific">Clostridium botulinum (strain Eklund 17B / Type B)</name>
    <dbReference type="NCBI Taxonomy" id="935198"/>
    <lineage>
        <taxon>Bacteria</taxon>
        <taxon>Bacillati</taxon>
        <taxon>Bacillota</taxon>
        <taxon>Clostridia</taxon>
        <taxon>Eubacteriales</taxon>
        <taxon>Clostridiaceae</taxon>
        <taxon>Clostridium</taxon>
    </lineage>
</organism>
<keyword id="KW-0687">Ribonucleoprotein</keyword>
<keyword id="KW-0689">Ribosomal protein</keyword>
<keyword id="KW-0694">RNA-binding</keyword>
<keyword id="KW-0699">rRNA-binding</keyword>
<name>RS4_CLOBB</name>
<accession>B2TIK3</accession>
<gene>
    <name evidence="1" type="primary">rpsD</name>
    <name type="ordered locus">CLL_A0266</name>
</gene>
<sequence>MARYTGATCRLCRREGMKLFLKGDRCFTDKCAFVRRSYAPGQHGASKKKMSNYGIQLREKQKARRIYGILEGQFRTYYEKAEHMKGITGENLLKLLEMRLDNVVYRLGYGASRNEARQLVTHGHFLVNGKKVDICSYHVSMNDVITVCEKSRSSEKFKTFVENPKTLPKWLEANVDNYEGKVVAEPSREDIDVPVNETLIVELYSK</sequence>
<feature type="chain" id="PRO_1000140710" description="Small ribosomal subunit protein uS4">
    <location>
        <begin position="1"/>
        <end position="206"/>
    </location>
</feature>
<feature type="domain" description="S4 RNA-binding" evidence="1">
    <location>
        <begin position="98"/>
        <end position="163"/>
    </location>
</feature>
<protein>
    <recommendedName>
        <fullName evidence="1">Small ribosomal subunit protein uS4</fullName>
    </recommendedName>
    <alternativeName>
        <fullName evidence="2">30S ribosomal protein S4</fullName>
    </alternativeName>
</protein>
<evidence type="ECO:0000255" key="1">
    <source>
        <dbReference type="HAMAP-Rule" id="MF_01306"/>
    </source>
</evidence>
<evidence type="ECO:0000305" key="2"/>
<comment type="function">
    <text evidence="1">One of the primary rRNA binding proteins, it binds directly to 16S rRNA where it nucleates assembly of the body of the 30S subunit.</text>
</comment>
<comment type="function">
    <text evidence="1">With S5 and S12 plays an important role in translational accuracy.</text>
</comment>
<comment type="subunit">
    <text evidence="1">Part of the 30S ribosomal subunit. Contacts protein S5. The interaction surface between S4 and S5 is involved in control of translational fidelity.</text>
</comment>
<comment type="similarity">
    <text evidence="1">Belongs to the universal ribosomal protein uS4 family.</text>
</comment>
<proteinExistence type="inferred from homology"/>